<gene>
    <name type="primary">PREPL</name>
</gene>
<sequence length="727" mass="83941">MQQKTKLFLQALKYSIPHLGKCMQKQHLNHYNFADHYYNRIKLKKYHLTKCLQNKPKISELARNIPSRSFSCKDLQPVKQENEKPLPENMDAFEKVRTKLETQPQEEYEIINVEVKHGGFVYYQEGCCLVRSKDEEADNDNYEVLFNLEELKLDQPFIDCIRVAPDEKYVAAKIRTEDSEASTCVIIKLSDQPVMEASFPNVSSFEWVKDEEDEDVLFYTFQRNLRCHDVYRATFGDNKRNERFYTEKDPSYFVFLYLTKDSRFLTINIMNKTTSEVWLIDGLSPWDPPVLIQKRIHGVLYYVEHRDDELYILTNVGEPTEFKLMRTAADTPAIMNWDLFFTMKRNTKVIDLDMFKDHCVLFLKHSNLLYVNVIGLADDSVRSLKLPPWACGFIMDTNSDPKNCPFQLCSPIRPPKYYTYKFAEGKLFEETGHEDPITKTSRVLRLEAKSKDGKLVPMTVFHKTDSEDLQKKPLLVQVYGAYGIDLKMNFRPERRVLVDDGWILAYCHVRGGGELGLQWHADGRLTKKLNGLADLEACIKTLHGQGFSQPSLTTLTAFSAGGVLAGALCNSNPELLRAVTLEAPFLDVLNTMMDTTLPLTLEELEEWGNPSSDEKHKNYIKHYCPYQNIKPQHYPSIHITAYENDERVPLKGIVSYTEKLKEAIAEHAKDTGEGYQSPNIILDIQPGGNHVIEDSHKKITAQIKFLYEELGLDSTSVFEDLKKYLKF</sequence>
<dbReference type="EC" id="3.4.21.-" evidence="1"/>
<dbReference type="EMBL" id="CR857812">
    <property type="protein sequence ID" value="CAH90070.1"/>
    <property type="molecule type" value="mRNA"/>
</dbReference>
<dbReference type="EMBL" id="CR859011">
    <property type="protein sequence ID" value="CAH91206.1"/>
    <property type="molecule type" value="mRNA"/>
</dbReference>
<dbReference type="EMBL" id="CR859512">
    <property type="protein sequence ID" value="CAH91680.1"/>
    <property type="molecule type" value="mRNA"/>
</dbReference>
<dbReference type="EMBL" id="CR860890">
    <property type="protein sequence ID" value="CAH92997.1"/>
    <property type="molecule type" value="mRNA"/>
</dbReference>
<dbReference type="RefSeq" id="NP_001124991.2">
    <molecule id="Q5RAK4-2"/>
    <property type="nucleotide sequence ID" value="NM_001131519.2"/>
</dbReference>
<dbReference type="RefSeq" id="NP_001128804.1">
    <property type="nucleotide sequence ID" value="NM_001135332.1"/>
</dbReference>
<dbReference type="RefSeq" id="XP_009235604.1">
    <molecule id="Q5RAK4-2"/>
    <property type="nucleotide sequence ID" value="XM_009237329.3"/>
</dbReference>
<dbReference type="RefSeq" id="XP_009235605.1">
    <molecule id="Q5RAK4-2"/>
    <property type="nucleotide sequence ID" value="XM_009237330.4"/>
</dbReference>
<dbReference type="RefSeq" id="XP_009235606.1">
    <molecule id="Q5RAK4-2"/>
    <property type="nucleotide sequence ID" value="XM_009237331.4"/>
</dbReference>
<dbReference type="RefSeq" id="XP_024097649.1">
    <molecule id="Q5RAK4-1"/>
    <property type="nucleotide sequence ID" value="XM_024241881.3"/>
</dbReference>
<dbReference type="RefSeq" id="XP_054401344.1">
    <molecule id="Q5RAK4-1"/>
    <property type="nucleotide sequence ID" value="XM_054545369.2"/>
</dbReference>
<dbReference type="RefSeq" id="XP_054401350.1">
    <molecule id="Q5RAK4-2"/>
    <property type="nucleotide sequence ID" value="XM_054545375.2"/>
</dbReference>
<dbReference type="RefSeq" id="XP_063569283.1">
    <molecule id="Q5RAK4-1"/>
    <property type="nucleotide sequence ID" value="XM_063713213.1"/>
</dbReference>
<dbReference type="SMR" id="Q5RAK4"/>
<dbReference type="FunCoup" id="Q5RAK4">
    <property type="interactions" value="1179"/>
</dbReference>
<dbReference type="STRING" id="9601.ENSPPYP00000013906"/>
<dbReference type="ESTHER" id="ponpy-q5rak4">
    <property type="family name" value="S9N_PREPL_Peptidase_S9"/>
</dbReference>
<dbReference type="MEROPS" id="S09.015"/>
<dbReference type="Ensembl" id="ENSPPYT00000014469.3">
    <molecule id="Q5RAK4-2"/>
    <property type="protein sequence ID" value="ENSPPYP00000013906.3"/>
    <property type="gene ID" value="ENSPPYG00000012449.3"/>
</dbReference>
<dbReference type="Ensembl" id="ENSPPYT00000036766.1">
    <molecule id="Q5RAK4-1"/>
    <property type="protein sequence ID" value="ENSPPYP00000038225.1"/>
    <property type="gene ID" value="ENSPPYG00000012449.3"/>
</dbReference>
<dbReference type="GeneID" id="100171865"/>
<dbReference type="KEGG" id="pon:100171865"/>
<dbReference type="CTD" id="9581"/>
<dbReference type="eggNOG" id="KOG2237">
    <property type="taxonomic scope" value="Eukaryota"/>
</dbReference>
<dbReference type="GeneTree" id="ENSGT00530000063426"/>
<dbReference type="HOGENOM" id="CLU_011290_2_1_1"/>
<dbReference type="InParanoid" id="Q5RAK4"/>
<dbReference type="OMA" id="NGYWYIT"/>
<dbReference type="OrthoDB" id="248387at2759"/>
<dbReference type="Proteomes" id="UP000001595">
    <property type="component" value="Chromosome 2A"/>
</dbReference>
<dbReference type="GO" id="GO:0005856">
    <property type="term" value="C:cytoskeleton"/>
    <property type="evidence" value="ECO:0007669"/>
    <property type="project" value="UniProtKB-SubCell"/>
</dbReference>
<dbReference type="GO" id="GO:0005829">
    <property type="term" value="C:cytosol"/>
    <property type="evidence" value="ECO:0007669"/>
    <property type="project" value="UniProtKB-SubCell"/>
</dbReference>
<dbReference type="GO" id="GO:0005634">
    <property type="term" value="C:nucleus"/>
    <property type="evidence" value="ECO:0007669"/>
    <property type="project" value="UniProtKB-SubCell"/>
</dbReference>
<dbReference type="GO" id="GO:0005802">
    <property type="term" value="C:trans-Golgi network"/>
    <property type="evidence" value="ECO:0007669"/>
    <property type="project" value="Ensembl"/>
</dbReference>
<dbReference type="GO" id="GO:0008233">
    <property type="term" value="F:peptidase activity"/>
    <property type="evidence" value="ECO:0000250"/>
    <property type="project" value="UniProtKB"/>
</dbReference>
<dbReference type="GO" id="GO:0004252">
    <property type="term" value="F:serine-type endopeptidase activity"/>
    <property type="evidence" value="ECO:0007669"/>
    <property type="project" value="InterPro"/>
</dbReference>
<dbReference type="GO" id="GO:0043001">
    <property type="term" value="P:Golgi to plasma membrane protein transport"/>
    <property type="evidence" value="ECO:0000250"/>
    <property type="project" value="UniProtKB"/>
</dbReference>
<dbReference type="GO" id="GO:0006508">
    <property type="term" value="P:proteolysis"/>
    <property type="evidence" value="ECO:0007669"/>
    <property type="project" value="UniProtKB-KW"/>
</dbReference>
<dbReference type="GO" id="GO:2000300">
    <property type="term" value="P:regulation of synaptic vesicle exocytosis"/>
    <property type="evidence" value="ECO:0000250"/>
    <property type="project" value="UniProtKB"/>
</dbReference>
<dbReference type="GO" id="GO:0042147">
    <property type="term" value="P:retrograde transport, endosome to Golgi"/>
    <property type="evidence" value="ECO:0000250"/>
    <property type="project" value="UniProtKB"/>
</dbReference>
<dbReference type="FunFam" id="2.130.10.120:FF:000002">
    <property type="entry name" value="prolyl endopeptidase-like isoform X1"/>
    <property type="match status" value="1"/>
</dbReference>
<dbReference type="FunFam" id="3.40.50.1820:FF:000050">
    <property type="entry name" value="prolyl endopeptidase-like isoform X2"/>
    <property type="match status" value="1"/>
</dbReference>
<dbReference type="Gene3D" id="3.40.50.1820">
    <property type="entry name" value="alpha/beta hydrolase"/>
    <property type="match status" value="1"/>
</dbReference>
<dbReference type="Gene3D" id="2.130.10.120">
    <property type="entry name" value="Prolyl oligopeptidase, N-terminal domain"/>
    <property type="match status" value="1"/>
</dbReference>
<dbReference type="InterPro" id="IPR029058">
    <property type="entry name" value="AB_hydrolase_fold"/>
</dbReference>
<dbReference type="InterPro" id="IPR023302">
    <property type="entry name" value="Pept_S9A_N"/>
</dbReference>
<dbReference type="InterPro" id="IPR001375">
    <property type="entry name" value="Peptidase_S9_cat"/>
</dbReference>
<dbReference type="InterPro" id="IPR002470">
    <property type="entry name" value="Peptidase_S9A"/>
</dbReference>
<dbReference type="InterPro" id="IPR051543">
    <property type="entry name" value="Serine_Peptidase_S9A"/>
</dbReference>
<dbReference type="PANTHER" id="PTHR11757:SF19">
    <property type="entry name" value="PROLYL ENDOPEPTIDASE-LIKE"/>
    <property type="match status" value="1"/>
</dbReference>
<dbReference type="PANTHER" id="PTHR11757">
    <property type="entry name" value="PROTEASE FAMILY S9A OLIGOPEPTIDASE"/>
    <property type="match status" value="1"/>
</dbReference>
<dbReference type="Pfam" id="PF00326">
    <property type="entry name" value="Peptidase_S9"/>
    <property type="match status" value="1"/>
</dbReference>
<dbReference type="Pfam" id="PF02897">
    <property type="entry name" value="Peptidase_S9_N"/>
    <property type="match status" value="1"/>
</dbReference>
<dbReference type="PRINTS" id="PR00862">
    <property type="entry name" value="PROLIGOPTASE"/>
</dbReference>
<dbReference type="SUPFAM" id="SSF53474">
    <property type="entry name" value="alpha/beta-Hydrolases"/>
    <property type="match status" value="1"/>
</dbReference>
<dbReference type="SUPFAM" id="SSF50993">
    <property type="entry name" value="Peptidase/esterase 'gauge' domain"/>
    <property type="match status" value="1"/>
</dbReference>
<reference key="1">
    <citation type="submission" date="2004-11" db="EMBL/GenBank/DDBJ databases">
        <authorList>
            <consortium name="The German cDNA consortium"/>
        </authorList>
    </citation>
    <scope>NUCLEOTIDE SEQUENCE [LARGE SCALE MRNA] (ISOFORMS 1 AND 2)</scope>
    <source>
        <tissue>Brain cortex</tissue>
        <tissue>Kidney</tissue>
    </source>
</reference>
<name>PPCEL_PONAB</name>
<proteinExistence type="evidence at transcript level"/>
<protein>
    <recommendedName>
        <fullName>Prolyl endopeptidase-like</fullName>
        <ecNumber evidence="1">3.4.21.-</ecNumber>
    </recommendedName>
    <alternativeName>
        <fullName>Prolylendopeptidase-like</fullName>
    </alternativeName>
</protein>
<feature type="chain" id="PRO_0000314863" description="Prolyl endopeptidase-like">
    <location>
        <begin position="1"/>
        <end position="727"/>
    </location>
</feature>
<feature type="active site" description="Charge relay system" evidence="1">
    <location>
        <position position="559"/>
    </location>
</feature>
<feature type="active site" description="Charge relay system" evidence="1">
    <location>
        <position position="645"/>
    </location>
</feature>
<feature type="active site" description="Charge relay system" evidence="1">
    <location>
        <position position="690"/>
    </location>
</feature>
<feature type="splice variant" id="VSP_030408" description="In isoform 2." evidence="3">
    <location>
        <begin position="1"/>
        <end position="89"/>
    </location>
</feature>
<feature type="sequence conflict" description="In Ref. 1; CAH90070." evidence="4" ref="1">
    <original>Y</original>
    <variation>C</variation>
    <location>
        <position position="122"/>
    </location>
</feature>
<feature type="sequence conflict" description="In Ref. 1; CAH91206." evidence="4" ref="1">
    <location>
        <position position="137"/>
    </location>
</feature>
<feature type="sequence conflict" description="In Ref. 1; CAH91206." evidence="4" ref="1">
    <original>E</original>
    <variation>G</variation>
    <location>
        <position position="149"/>
    </location>
</feature>
<feature type="sequence conflict" description="In Ref. 1; CAH91206." evidence="4" ref="1">
    <original>N</original>
    <variation>D</variation>
    <location>
        <position position="644"/>
    </location>
</feature>
<feature type="sequence conflict" description="In Ref. 1; CAH90070." evidence="4" ref="1">
    <original>I</original>
    <variation>M</variation>
    <location>
        <position position="684"/>
    </location>
</feature>
<comment type="function">
    <text evidence="1">Serine peptidase whose precise substrate specificity remains unclear (By similarity). Does not cleave peptides after a arginine or lysine residue (By similarity). Regulates trans-Golgi network morphology and sorting by regulating the membrane binding of the AP-1 complex (By similarity). May play a role in the regulation of synaptic vesicle exocytosis (By similarity).</text>
</comment>
<comment type="subunit">
    <text evidence="1">Homodimer (By similarity). Interacts with the AP-1 complex (By similarity).</text>
</comment>
<comment type="subcellular location">
    <subcellularLocation>
        <location evidence="1">Cytoplasm</location>
        <location evidence="1">Cytosol</location>
    </subcellularLocation>
    <subcellularLocation>
        <location evidence="2">Golgi apparatus</location>
        <location evidence="2">trans-Golgi network</location>
    </subcellularLocation>
    <subcellularLocation>
        <location evidence="2">Cytoplasm</location>
        <location evidence="2">Cytoskeleton</location>
    </subcellularLocation>
    <subcellularLocation>
        <location evidence="2">Golgi apparatus</location>
    </subcellularLocation>
    <subcellularLocation>
        <location evidence="1">Nucleus</location>
    </subcellularLocation>
    <text evidence="2">Co-localizes with AP-1 in the trans-Golgi network (By similarity). Co-localizes with MAP2 and ACTB on the cytoskeleton (By similarity). Co-localizes with STX6 and GOSR2 at the Golgi apparatus (By similarity).</text>
</comment>
<comment type="alternative products">
    <event type="alternative splicing"/>
    <isoform>
        <id>Q5RAK4-1</id>
        <name>1</name>
        <sequence type="displayed"/>
    </isoform>
    <isoform>
        <id>Q5RAK4-2</id>
        <name>2</name>
        <sequence type="described" ref="VSP_030408"/>
    </isoform>
</comment>
<comment type="similarity">
    <text evidence="4">Belongs to the peptidase S9A family.</text>
</comment>
<organism>
    <name type="scientific">Pongo abelii</name>
    <name type="common">Sumatran orangutan</name>
    <name type="synonym">Pongo pygmaeus abelii</name>
    <dbReference type="NCBI Taxonomy" id="9601"/>
    <lineage>
        <taxon>Eukaryota</taxon>
        <taxon>Metazoa</taxon>
        <taxon>Chordata</taxon>
        <taxon>Craniata</taxon>
        <taxon>Vertebrata</taxon>
        <taxon>Euteleostomi</taxon>
        <taxon>Mammalia</taxon>
        <taxon>Eutheria</taxon>
        <taxon>Euarchontoglires</taxon>
        <taxon>Primates</taxon>
        <taxon>Haplorrhini</taxon>
        <taxon>Catarrhini</taxon>
        <taxon>Hominidae</taxon>
        <taxon>Pongo</taxon>
    </lineage>
</organism>
<keyword id="KW-0025">Alternative splicing</keyword>
<keyword id="KW-0963">Cytoplasm</keyword>
<keyword id="KW-0206">Cytoskeleton</keyword>
<keyword id="KW-0333">Golgi apparatus</keyword>
<keyword id="KW-0378">Hydrolase</keyword>
<keyword id="KW-0539">Nucleus</keyword>
<keyword id="KW-0645">Protease</keyword>
<keyword id="KW-1185">Reference proteome</keyword>
<keyword id="KW-0720">Serine protease</keyword>
<accession>Q5RAK4</accession>
<accession>Q5R5G9</accession>
<accession>Q5RDT7</accession>
<evidence type="ECO:0000250" key="1">
    <source>
        <dbReference type="UniProtKB" id="Q4J6C6"/>
    </source>
</evidence>
<evidence type="ECO:0000250" key="2">
    <source>
        <dbReference type="UniProtKB" id="Q8C167"/>
    </source>
</evidence>
<evidence type="ECO:0000303" key="3">
    <source ref="1"/>
</evidence>
<evidence type="ECO:0000305" key="4"/>